<reference key="1">
    <citation type="journal article" date="2015" name="BMC Genomics">
        <title>Genomic and transcriptomic analysis of the endophytic fungus Pestalotiopsis fici reveals its lifestyle and high potential for synthesis of natural products.</title>
        <authorList>
            <person name="Wang X."/>
            <person name="Zhang X."/>
            <person name="Liu L."/>
            <person name="Xiang M."/>
            <person name="Wang W."/>
            <person name="Sun X."/>
            <person name="Che Y."/>
            <person name="Guo L."/>
            <person name="Liu G."/>
            <person name="Guo L."/>
            <person name="Wang C."/>
            <person name="Yin W.B."/>
            <person name="Stadler M."/>
            <person name="Zhang X."/>
            <person name="Liu X."/>
        </authorList>
    </citation>
    <scope>NUCLEOTIDE SEQUENCE [LARGE SCALE GENOMIC DNA]</scope>
    <source>
        <strain>W106-1 / CGMCC3.15140</strain>
    </source>
</reference>
<reference key="2">
    <citation type="journal article" date="2022" name="Nat. Commun.">
        <title>A fungal NRPS-PKS enzyme catalyzes the formation of the flavonoid naringenin.</title>
        <authorList>
            <person name="Zhang H."/>
            <person name="Li Z."/>
            <person name="Zhou S."/>
            <person name="Li S.M."/>
            <person name="Ran H."/>
            <person name="Song Z."/>
            <person name="Yu T."/>
            <person name="Yin W.B."/>
        </authorList>
    </citation>
    <scope>FUNCTION</scope>
    <scope>DOMAIN</scope>
    <scope>DISRUPTION PHENOTYPE</scope>
    <scope>CATALYTIC ACTIVITY</scope>
</reference>
<evidence type="ECO:0000255" key="1"/>
<evidence type="ECO:0000255" key="2">
    <source>
        <dbReference type="PROSITE-ProRule" id="PRU00258"/>
    </source>
</evidence>
<evidence type="ECO:0000255" key="3">
    <source>
        <dbReference type="PROSITE-ProRule" id="PRU01348"/>
    </source>
</evidence>
<evidence type="ECO:0000255" key="4">
    <source>
        <dbReference type="PROSITE-ProRule" id="PRU01363"/>
    </source>
</evidence>
<evidence type="ECO:0000256" key="5">
    <source>
        <dbReference type="SAM" id="MobiDB-lite"/>
    </source>
</evidence>
<evidence type="ECO:0000269" key="6">
    <source>
    </source>
</evidence>
<evidence type="ECO:0000269" key="7">
    <source>
    </source>
</evidence>
<evidence type="ECO:0000303" key="8">
    <source>
    </source>
</evidence>
<evidence type="ECO:0000305" key="9"/>
<evidence type="ECO:0000305" key="10">
    <source>
    </source>
</evidence>
<comment type="function">
    <text evidence="7">PKS-NRPS hybrid synthetase that, alone, is sufficient to produce naringenin chalcone, the direct precursor of naringenin, by using p-coumaric acid (p-CA) or p-hydroxybenzoic acid (p-HBA) with the involvement of malonyl-CoA molecules (PubMed:36289208). The adenylation (A) domain activates p-CA or p-HBA as adenylates, which are transferred to the thiol group of the pantetheinyl residue of the T domain, and further transferred to the adjacent PKS portion of fnsA (PubMed:36289208). Besides p-CA and p-HBA, the A domain is also able to activate other substrates such as cinnamic acid and salicyclic acid (PubMed:36289208). Within the PKS portion of fnsA, p-CA and p-HBA act as starter units for respectively three or four malonyl-CoA molecules for elongation by the AT and KS domains of fnsA (PubMed:36289208). Afterwards, naringenin chalcone is cyclized through Claisen condensation and thereby released either spontaneously or catalyzed by the TE domain (PubMed:36289208). Finally, naringenin chalcone is converted to naringenin spontaneously or by a chalcone isomerase (PubMed:36289208).</text>
</comment>
<comment type="cofactor">
    <cofactor evidence="2">
        <name>pantetheine 4'-phosphate</name>
        <dbReference type="ChEBI" id="CHEBI:47942"/>
    </cofactor>
</comment>
<comment type="domain">
    <text evidence="10">NRP synthetases are composed of discrete domains (adenylation (A), thiolation (T) or peptidyl carrier protein (PCP) and condensation (C) domains) which when grouped together are referred to as a single module. Each module is responsible for the recognition (via the A domain) and incorporation of a single amino acid into the growing peptide product. Thus, an NRP synthetase is generally composed of one or more modules and can terminate in a thioesterase domain (TE) that releases the newly synthesized peptide from the enzyme. Occasionally, epimerase (E) domains (responsible for L- to D- amino acid conversion) are present within the NRP synthetase. FnsA also contains a polyketide synthase module (PKS) consisting of several catalytic domains including a ketoacyl synthase domain (KS), an acyl transferase domain (AT), a dehydratase domain (DH), a ketoreductase domain (KR), and a C-terminal thioesterase (TE) domain. FnsS has the following architecture: A-T-KS-AT-DH-KR-ACP-TE.</text>
</comment>
<comment type="disruption phenotype">
    <text evidence="7">Does not lead to any phenotype, indicating that fnsA is silent or lowly expressed in laboratory conditions.</text>
</comment>
<comment type="miscellaneous">
    <text evidence="6">In-depth analysis indicates that the upstream and downstream sequences of fnsA are likely not related genes for the biosynthesis, suggesting fnsA as an independently functional gene.</text>
</comment>
<comment type="similarity">
    <text evidence="9">In the N-terminal section; belongs to the NRP synthetase family.</text>
</comment>
<organism>
    <name type="scientific">Pestalotiopsis fici (strain W106-1 / CGMCC3.15140)</name>
    <dbReference type="NCBI Taxonomy" id="1229662"/>
    <lineage>
        <taxon>Eukaryota</taxon>
        <taxon>Fungi</taxon>
        <taxon>Dikarya</taxon>
        <taxon>Ascomycota</taxon>
        <taxon>Pezizomycotina</taxon>
        <taxon>Sordariomycetes</taxon>
        <taxon>Xylariomycetidae</taxon>
        <taxon>Amphisphaeriales</taxon>
        <taxon>Sporocadaceae</taxon>
        <taxon>Pestalotiopsis</taxon>
    </lineage>
</organism>
<gene>
    <name evidence="8" type="primary">fnsA</name>
    <name type="ORF">PFICI_04360</name>
</gene>
<accession>W3X8X8</accession>
<sequence length="2717" mass="290520">MSQPTSVPKLLLHHAVESRDKVAFLGPGWSITYSDLEKRTRLVAAHLARAGIGRGDFVAIVLGRCLEAVESVLAIMRAGAVSVPLDPRSPPADLARVLEHSGARAIITDDRHLATVSAAAVKGSLIIISTTNAQVDVIESLKTERYQDWVEDDGYSTSDVHLDSLGDEEEAFLHYTSGTTSLPKGVLSSQKSALWNVEKVTSVFEFSSEDRFFWPLPLFHILGHSLCILATVAKGASAYLSDPDQLLLDNLLVKDVEDTTFIAGAPATFHELVEAKAASSSTLSLPKLRACMSAGAAASVSLCDQVHELFGVSLLNNYGCTETCGAIAISRPGHVYRQHGSVTPLPDWEIQLMDQDGKQVREGEQGELWVRGPGLMLGYYKETQSPFTEDAWFPTGDTGILTTSDVGKELSLVGRKKELIIRGGENIQPAELEQVLLQHPGVADVAVSGILHGLLGETPAAFIVKETPDLDLDLSSLIATCREALPDYKVPTAFYEIDAVPRTLLGKPKRLAVASYTSKPLTVRSRLQTRAAVEALVLAETAGACGVQAEPGEKESDPDWLRKYADESFSHLGLTSMAGVVLRDRLANLTGLVDLPNTLVFDYSTPAAVRDYLFNRLREQESPLPSKSAPALSLPSKAEPIAIISMACRYPGGISSPEDLWQLVSDEIDATTDFPSDRGWDIDSLYSTDPTEPFTSTTKRGGFLPDFADFDAGLFGMAPREALATDPQQRLLLETTWELAERGGIAPLSLKGTQTGCFIGTLYDDYEANGFGNAELEAHLGLGSSGSVMSGRISYYFGLHGPSIVISTGCSSSLCAVHSAAQALRNEECTLAIAGGITCMASPRPFTMFSKRRGLSADGRCRTYSSDAAGTGWSEGVGLIMLEKLSDAQRNGHRVLGVIRGSAVNSDGTSNGLTAPSGPAQQMCIQSALSQAALSPTDIDVLEGHGTATPLGDPIEVQAVINTYGNGSGNDPRANPLLIGSIKSNIGHTQAAAAVAGIIKMVKSIHHGVAPASLHIREPSRHIDWDGCGVEPLSKAKQWPSVDRARRAAVSSFGIGGTNAHIILEQPDSIEQNGVSTPKNHTIAFPWIISGADENALRAQAQSLLAAWRKSLSHESPSDIAFSLATARSSLKYRAVVTYTAGGDLNDQIETALTALAEDESHPDVVTGHTNTTGNKPRLACLFSGQGSRMPDPSAIEELSTVFPIFSRAFKEACEEVNQYLECPLERALSDSSLLDRTDFAQPALFVFEVAMYRLLESFDVIPDVVSGHSLGEIAAAHISGALTLRDAAIIVTTRSRLMAALDANGGMVSIAAPEQEVAEELSRLGSTAIIAVVNSEKSVVVSGTREAITAVADRFTELGRRTTILRNVNHGFHSPMMNGILGDLEEALASSIGSGTSSKIPLVSTVTGKLAEAAQLTSPQYWTRHVSEPVRFADSVNELRSNERVSVFIEVGPSAVLSPHVPGTVATYGTVGKLLNTLGQIWARGVPVNWQAVFGGVGAHLVDLPVYAFQRRKYWLPYRTLLPAESVGASGASSPGRTSDIGTSTLNHGVLYRTTSIAGTNDIICAGFVSASKQPWLRDHIISGQSLVPATAFAELALRAGRECADPSGSEQVILDELIILAPLALSLEEDDEEQEFEVQVVIKELEDEESTIRRSIDVYSRLHAVSTQPDWVQHATGTLKLISLPPPEKDVFTNGTHDVENSEVDVSKAYAMLEDFGISYGPAFQGVRGGWRQHDNELLVQINPPQDQDSKAGFVLHPALLDAALHAPILAAPEKVSSGQIRLPFSFKGIQVFEAATSTSGPVLARIRDLDDERFSVTITNKATGAAVAEISEVMLRAVQPPVVEGDLYRLKWTELKAAQTTKPNLVDDIFTVQAPRNVDAADIPKAVHNAVSEALRAIQQWRTKKANSSDKIRLIFVTEQASLHPDVNVIDAAVWGFVRSAQTEFGGENIILIDLDGSAESQEALPSAFDCGQEVVALQDGKIMVPTLSKEPPVPSTSTTLDVSGTVLITGGTGGLGAILSRHLVQTCGARNLLLTSRSGIKAAGATELLDELSAQDATVVRIESCDISDRAQLATLLEGNHGHPPITAIIHCAGVVDDGVLTSLTPERISRVLQAKVDAAWNLHQLAPETTRTFVLYSSFVGIVGNEGQAAYTAGNAFLNALARMRVAQGLPAVSLAWGPWANDVGMAAGDKLVIPNLRIASAQPVVDQQGLHLFDRALQTSEPVLVPLLLRGPFPMVPSAAAVTKSKKATAKGKAKTGAAWRKKLAAVSPESRSDTLLGLVRDEIAAVLGYQGQELPDGPLSDLGFDSFTSVTVSNRMRVLTGFRDLPVTLALDYDTPQALVQYLLDRINAEPETEIELDQDVAEEETVSGTNGHQNGHQNGTQNGHSNGHANGASTNGDATDGIDPEEFRGLSTLHRRLCRLEQYTAAADLLASAALAMPTFPSNGRKLLDYVADPHRLATGPEVSPGNDAPLPVVFIAPFFPRIKIGGISLSVYSAVAASLNGKRDVFELPHPEGQYVPEDLDTLAELHVSTIEQQFGDRPGIILAGYSAGGTVAYAVASKLAQAGKHPRLAGFVLVDTYLTMTGRGDPDWLNALPAEALVSRLGGPDSTGESLVGDLDLALAKVGGYFRTLRDWDQELYPLPDALSTLFVRALDPSEKMPKNADIWRPRWQRANHTVEVPGSHLALLDKRYAPAIAVEIEHWAKEQLGV</sequence>
<protein>
    <recommendedName>
        <fullName evidence="8">Naringenin synthase</fullName>
        <ecNumber evidence="8">2.3.1.-</ecNumber>
        <ecNumber evidence="8">6.3.2.-</ecNumber>
    </recommendedName>
    <alternativeName>
        <fullName evidence="8">PKS-NRPS hybrid synthetase fnsA</fullName>
        <shortName evidence="8">PKS-NRPS fnsA</shortName>
    </alternativeName>
</protein>
<name>FNSA_PESFW</name>
<dbReference type="EC" id="2.3.1.-" evidence="8"/>
<dbReference type="EC" id="6.3.2.-" evidence="8"/>
<dbReference type="EMBL" id="KI912111">
    <property type="protein sequence ID" value="ETS82484.1"/>
    <property type="molecule type" value="Genomic_DNA"/>
</dbReference>
<dbReference type="RefSeq" id="XP_007831132.1">
    <property type="nucleotide sequence ID" value="XM_007832941.1"/>
</dbReference>
<dbReference type="SMR" id="W3X8X8"/>
<dbReference type="STRING" id="1229662.W3X8X8"/>
<dbReference type="GeneID" id="19269373"/>
<dbReference type="KEGG" id="pfy:PFICI_04360"/>
<dbReference type="eggNOG" id="KOG1176">
    <property type="taxonomic scope" value="Eukaryota"/>
</dbReference>
<dbReference type="eggNOG" id="KOG1202">
    <property type="taxonomic scope" value="Eukaryota"/>
</dbReference>
<dbReference type="HOGENOM" id="CLU_000022_35_0_1"/>
<dbReference type="InParanoid" id="W3X8X8"/>
<dbReference type="OrthoDB" id="5334845at2759"/>
<dbReference type="Proteomes" id="UP000030651">
    <property type="component" value="Unassembled WGS sequence"/>
</dbReference>
<dbReference type="GO" id="GO:0004315">
    <property type="term" value="F:3-oxoacyl-[acyl-carrier-protein] synthase activity"/>
    <property type="evidence" value="ECO:0007669"/>
    <property type="project" value="InterPro"/>
</dbReference>
<dbReference type="GO" id="GO:0004312">
    <property type="term" value="F:fatty acid synthase activity"/>
    <property type="evidence" value="ECO:0007669"/>
    <property type="project" value="TreeGrafter"/>
</dbReference>
<dbReference type="GO" id="GO:0016874">
    <property type="term" value="F:ligase activity"/>
    <property type="evidence" value="ECO:0007669"/>
    <property type="project" value="UniProtKB-KW"/>
</dbReference>
<dbReference type="GO" id="GO:0016491">
    <property type="term" value="F:oxidoreductase activity"/>
    <property type="evidence" value="ECO:0007669"/>
    <property type="project" value="UniProtKB-KW"/>
</dbReference>
<dbReference type="GO" id="GO:0031177">
    <property type="term" value="F:phosphopantetheine binding"/>
    <property type="evidence" value="ECO:0007669"/>
    <property type="project" value="InterPro"/>
</dbReference>
<dbReference type="GO" id="GO:0006633">
    <property type="term" value="P:fatty acid biosynthetic process"/>
    <property type="evidence" value="ECO:0007669"/>
    <property type="project" value="InterPro"/>
</dbReference>
<dbReference type="GO" id="GO:0030639">
    <property type="term" value="P:polyketide biosynthetic process"/>
    <property type="evidence" value="ECO:0007669"/>
    <property type="project" value="UniProtKB-ARBA"/>
</dbReference>
<dbReference type="GO" id="GO:0009403">
    <property type="term" value="P:toxin biosynthetic process"/>
    <property type="evidence" value="ECO:0007669"/>
    <property type="project" value="UniProtKB-ARBA"/>
</dbReference>
<dbReference type="CDD" id="cd08956">
    <property type="entry name" value="KR_3_FAS_SDR_x"/>
    <property type="match status" value="1"/>
</dbReference>
<dbReference type="CDD" id="cd00833">
    <property type="entry name" value="PKS"/>
    <property type="match status" value="1"/>
</dbReference>
<dbReference type="FunFam" id="3.40.47.10:FF:000019">
    <property type="entry name" value="Polyketide synthase type I"/>
    <property type="match status" value="1"/>
</dbReference>
<dbReference type="Gene3D" id="3.30.300.30">
    <property type="match status" value="1"/>
</dbReference>
<dbReference type="Gene3D" id="3.30.70.3290">
    <property type="match status" value="1"/>
</dbReference>
<dbReference type="Gene3D" id="3.40.47.10">
    <property type="match status" value="1"/>
</dbReference>
<dbReference type="Gene3D" id="1.10.1200.10">
    <property type="entry name" value="ACP-like"/>
    <property type="match status" value="2"/>
</dbReference>
<dbReference type="Gene3D" id="3.40.50.1820">
    <property type="entry name" value="alpha/beta hydrolase"/>
    <property type="match status" value="1"/>
</dbReference>
<dbReference type="Gene3D" id="3.40.366.10">
    <property type="entry name" value="Malonyl-Coenzyme A Acyl Carrier Protein, domain 2"/>
    <property type="match status" value="1"/>
</dbReference>
<dbReference type="Gene3D" id="3.40.50.12780">
    <property type="entry name" value="N-terminal domain of ligase-like"/>
    <property type="match status" value="1"/>
</dbReference>
<dbReference type="Gene3D" id="3.40.50.720">
    <property type="entry name" value="NAD(P)-binding Rossmann-like Domain"/>
    <property type="match status" value="1"/>
</dbReference>
<dbReference type="Gene3D" id="3.10.129.110">
    <property type="entry name" value="Polyketide synthase dehydratase"/>
    <property type="match status" value="1"/>
</dbReference>
<dbReference type="InterPro" id="IPR029058">
    <property type="entry name" value="AB_hydrolase_fold"/>
</dbReference>
<dbReference type="InterPro" id="IPR001227">
    <property type="entry name" value="Ac_transferase_dom_sf"/>
</dbReference>
<dbReference type="InterPro" id="IPR036736">
    <property type="entry name" value="ACP-like_sf"/>
</dbReference>
<dbReference type="InterPro" id="IPR014043">
    <property type="entry name" value="Acyl_transferase_dom"/>
</dbReference>
<dbReference type="InterPro" id="IPR016035">
    <property type="entry name" value="Acyl_Trfase/lysoPLipase"/>
</dbReference>
<dbReference type="InterPro" id="IPR025110">
    <property type="entry name" value="AMP-bd_C"/>
</dbReference>
<dbReference type="InterPro" id="IPR045851">
    <property type="entry name" value="AMP-bd_C_sf"/>
</dbReference>
<dbReference type="InterPro" id="IPR020845">
    <property type="entry name" value="AMP-binding_CS"/>
</dbReference>
<dbReference type="InterPro" id="IPR000873">
    <property type="entry name" value="AMP-dep_synth/lig_dom"/>
</dbReference>
<dbReference type="InterPro" id="IPR042099">
    <property type="entry name" value="ANL_N_sf"/>
</dbReference>
<dbReference type="InterPro" id="IPR018201">
    <property type="entry name" value="Ketoacyl_synth_AS"/>
</dbReference>
<dbReference type="InterPro" id="IPR014031">
    <property type="entry name" value="Ketoacyl_synth_C"/>
</dbReference>
<dbReference type="InterPro" id="IPR014030">
    <property type="entry name" value="Ketoacyl_synth_N"/>
</dbReference>
<dbReference type="InterPro" id="IPR016036">
    <property type="entry name" value="Malonyl_transacylase_ACP-bd"/>
</dbReference>
<dbReference type="InterPro" id="IPR036291">
    <property type="entry name" value="NAD(P)-bd_dom_sf"/>
</dbReference>
<dbReference type="InterPro" id="IPR032821">
    <property type="entry name" value="PKS_assoc"/>
</dbReference>
<dbReference type="InterPro" id="IPR020841">
    <property type="entry name" value="PKS_Beta-ketoAc_synthase_dom"/>
</dbReference>
<dbReference type="InterPro" id="IPR042104">
    <property type="entry name" value="PKS_dehydratase_sf"/>
</dbReference>
<dbReference type="InterPro" id="IPR020807">
    <property type="entry name" value="PKS_DH"/>
</dbReference>
<dbReference type="InterPro" id="IPR049551">
    <property type="entry name" value="PKS_DH_C"/>
</dbReference>
<dbReference type="InterPro" id="IPR049552">
    <property type="entry name" value="PKS_DH_N"/>
</dbReference>
<dbReference type="InterPro" id="IPR013968">
    <property type="entry name" value="PKS_KR"/>
</dbReference>
<dbReference type="InterPro" id="IPR049900">
    <property type="entry name" value="PKS_mFAS_DH"/>
</dbReference>
<dbReference type="InterPro" id="IPR050091">
    <property type="entry name" value="PKS_NRPS_Biosynth_Enz"/>
</dbReference>
<dbReference type="InterPro" id="IPR020806">
    <property type="entry name" value="PKS_PP-bd"/>
</dbReference>
<dbReference type="InterPro" id="IPR020802">
    <property type="entry name" value="PKS_thioesterase"/>
</dbReference>
<dbReference type="InterPro" id="IPR009081">
    <property type="entry name" value="PP-bd_ACP"/>
</dbReference>
<dbReference type="InterPro" id="IPR055123">
    <property type="entry name" value="SpnB-like_Rossmann"/>
</dbReference>
<dbReference type="InterPro" id="IPR001031">
    <property type="entry name" value="Thioesterase"/>
</dbReference>
<dbReference type="InterPro" id="IPR016039">
    <property type="entry name" value="Thiolase-like"/>
</dbReference>
<dbReference type="PANTHER" id="PTHR43775">
    <property type="entry name" value="FATTY ACID SYNTHASE"/>
    <property type="match status" value="1"/>
</dbReference>
<dbReference type="PANTHER" id="PTHR43775:SF37">
    <property type="entry name" value="SI:DKEY-61P9.11"/>
    <property type="match status" value="1"/>
</dbReference>
<dbReference type="Pfam" id="PF00698">
    <property type="entry name" value="Acyl_transf_1"/>
    <property type="match status" value="1"/>
</dbReference>
<dbReference type="Pfam" id="PF00501">
    <property type="entry name" value="AMP-binding"/>
    <property type="match status" value="1"/>
</dbReference>
<dbReference type="Pfam" id="PF13193">
    <property type="entry name" value="AMP-binding_C"/>
    <property type="match status" value="1"/>
</dbReference>
<dbReference type="Pfam" id="PF16197">
    <property type="entry name" value="KAsynt_C_assoc"/>
    <property type="match status" value="1"/>
</dbReference>
<dbReference type="Pfam" id="PF00109">
    <property type="entry name" value="ketoacyl-synt"/>
    <property type="match status" value="1"/>
</dbReference>
<dbReference type="Pfam" id="PF02801">
    <property type="entry name" value="Ketoacyl-synt_C"/>
    <property type="match status" value="1"/>
</dbReference>
<dbReference type="Pfam" id="PF08659">
    <property type="entry name" value="KR"/>
    <property type="match status" value="1"/>
</dbReference>
<dbReference type="Pfam" id="PF21089">
    <property type="entry name" value="PKS_DH_N"/>
    <property type="match status" value="1"/>
</dbReference>
<dbReference type="Pfam" id="PF00550">
    <property type="entry name" value="PP-binding"/>
    <property type="match status" value="1"/>
</dbReference>
<dbReference type="Pfam" id="PF14765">
    <property type="entry name" value="PS-DH"/>
    <property type="match status" value="1"/>
</dbReference>
<dbReference type="Pfam" id="PF22953">
    <property type="entry name" value="SpnB_Rossmann"/>
    <property type="match status" value="1"/>
</dbReference>
<dbReference type="Pfam" id="PF00975">
    <property type="entry name" value="Thioesterase"/>
    <property type="match status" value="1"/>
</dbReference>
<dbReference type="SMART" id="SM00827">
    <property type="entry name" value="PKS_AT"/>
    <property type="match status" value="1"/>
</dbReference>
<dbReference type="SMART" id="SM00826">
    <property type="entry name" value="PKS_DH"/>
    <property type="match status" value="1"/>
</dbReference>
<dbReference type="SMART" id="SM00822">
    <property type="entry name" value="PKS_KR"/>
    <property type="match status" value="1"/>
</dbReference>
<dbReference type="SMART" id="SM00825">
    <property type="entry name" value="PKS_KS"/>
    <property type="match status" value="1"/>
</dbReference>
<dbReference type="SMART" id="SM00823">
    <property type="entry name" value="PKS_PP"/>
    <property type="match status" value="2"/>
</dbReference>
<dbReference type="SMART" id="SM00824">
    <property type="entry name" value="PKS_TE"/>
    <property type="match status" value="1"/>
</dbReference>
<dbReference type="SUPFAM" id="SSF56801">
    <property type="entry name" value="Acetyl-CoA synthetase-like"/>
    <property type="match status" value="1"/>
</dbReference>
<dbReference type="SUPFAM" id="SSF47336">
    <property type="entry name" value="ACP-like"/>
    <property type="match status" value="1"/>
</dbReference>
<dbReference type="SUPFAM" id="SSF53474">
    <property type="entry name" value="alpha/beta-Hydrolases"/>
    <property type="match status" value="1"/>
</dbReference>
<dbReference type="SUPFAM" id="SSF52151">
    <property type="entry name" value="FabD/lysophospholipase-like"/>
    <property type="match status" value="1"/>
</dbReference>
<dbReference type="SUPFAM" id="SSF51735">
    <property type="entry name" value="NAD(P)-binding Rossmann-fold domains"/>
    <property type="match status" value="2"/>
</dbReference>
<dbReference type="SUPFAM" id="SSF55048">
    <property type="entry name" value="Probable ACP-binding domain of malonyl-CoA ACP transacylase"/>
    <property type="match status" value="1"/>
</dbReference>
<dbReference type="SUPFAM" id="SSF53901">
    <property type="entry name" value="Thiolase-like"/>
    <property type="match status" value="1"/>
</dbReference>
<dbReference type="PROSITE" id="PS00455">
    <property type="entry name" value="AMP_BINDING"/>
    <property type="match status" value="1"/>
</dbReference>
<dbReference type="PROSITE" id="PS50075">
    <property type="entry name" value="CARRIER"/>
    <property type="match status" value="2"/>
</dbReference>
<dbReference type="PROSITE" id="PS00606">
    <property type="entry name" value="KS3_1"/>
    <property type="match status" value="1"/>
</dbReference>
<dbReference type="PROSITE" id="PS52004">
    <property type="entry name" value="KS3_2"/>
    <property type="match status" value="1"/>
</dbReference>
<dbReference type="PROSITE" id="PS52019">
    <property type="entry name" value="PKS_MFAS_DH"/>
    <property type="match status" value="1"/>
</dbReference>
<proteinExistence type="evidence at protein level"/>
<keyword id="KW-0436">Ligase</keyword>
<keyword id="KW-0511">Multifunctional enzyme</keyword>
<keyword id="KW-0560">Oxidoreductase</keyword>
<keyword id="KW-0596">Phosphopantetheine</keyword>
<keyword id="KW-0597">Phosphoprotein</keyword>
<keyword id="KW-1185">Reference proteome</keyword>
<keyword id="KW-0808">Transferase</keyword>
<feature type="chain" id="PRO_0000457565" description="Naringenin synthase">
    <location>
        <begin position="1"/>
        <end position="2717"/>
    </location>
</feature>
<feature type="domain" description="Carrier 1" evidence="2 8">
    <location>
        <begin position="531"/>
        <end position="617"/>
    </location>
</feature>
<feature type="domain" description="Ketosynthase family 3 (KS3)" evidence="3 8">
    <location>
        <begin position="638"/>
        <end position="1066"/>
    </location>
</feature>
<feature type="domain" description="Malonyl-CoA:ACP transacylase (MAT)" evidence="1 8">
    <location>
        <begin position="1204"/>
        <end position="1462"/>
    </location>
</feature>
<feature type="domain" description="PKS/mFAS DH" evidence="4">
    <location>
        <begin position="1549"/>
        <end position="1847"/>
    </location>
</feature>
<feature type="domain" description="Ketoreductase (KR)" evidence="1 8">
    <location>
        <begin position="2008"/>
        <end position="2186"/>
    </location>
</feature>
<feature type="domain" description="Carrier 2" evidence="2 8">
    <location>
        <begin position="2277"/>
        <end position="2354"/>
    </location>
</feature>
<feature type="region of interest" description="Adenylation (A) domain" evidence="1 8">
    <location>
        <begin position="13"/>
        <end position="422"/>
    </location>
</feature>
<feature type="region of interest" description="N-terminal hotdog fold" evidence="4">
    <location>
        <begin position="1549"/>
        <end position="1688"/>
    </location>
</feature>
<feature type="region of interest" description="Dehydratase (DH) domain" evidence="1 8">
    <location>
        <begin position="1561"/>
        <end position="1842"/>
    </location>
</feature>
<feature type="region of interest" description="C-terminal hotdog fold" evidence="4">
    <location>
        <begin position="1703"/>
        <end position="1847"/>
    </location>
</feature>
<feature type="region of interest" description="Disordered" evidence="5">
    <location>
        <begin position="2361"/>
        <end position="2412"/>
    </location>
</feature>
<feature type="region of interest" description="Thioester reductase (TE) domain" evidence="1 8">
    <location>
        <begin position="2497"/>
        <end position="2711"/>
    </location>
</feature>
<feature type="compositionally biased region" description="Acidic residues" evidence="5">
    <location>
        <begin position="2361"/>
        <end position="2373"/>
    </location>
</feature>
<feature type="compositionally biased region" description="Low complexity" evidence="5">
    <location>
        <begin position="2375"/>
        <end position="2396"/>
    </location>
</feature>
<feature type="active site" description="For beta-ketoacyl synthase activity" evidence="3">
    <location>
        <position position="810"/>
    </location>
</feature>
<feature type="active site" description="For beta-ketoacyl synthase activity" evidence="3">
    <location>
        <position position="945"/>
    </location>
</feature>
<feature type="active site" description="For beta-ketoacyl synthase activity" evidence="3">
    <location>
        <position position="988"/>
    </location>
</feature>
<feature type="active site" description="Proton acceptor; for dehydratase activity" evidence="4">
    <location>
        <position position="1581"/>
    </location>
</feature>
<feature type="active site" description="Proton donor; for dehydratase activity" evidence="4">
    <location>
        <position position="1764"/>
    </location>
</feature>
<feature type="modified residue" description="O-(pantetheine 4'-phosphoryl)serine" evidence="2">
    <location>
        <position position="576"/>
    </location>
</feature>
<feature type="modified residue" description="O-(pantetheine 4'-phosphoryl)serine" evidence="2">
    <location>
        <position position="2313"/>
    </location>
</feature>